<comment type="function">
    <text evidence="1">Required for maturation of 30S ribosomal subunits.</text>
</comment>
<comment type="subcellular location">
    <subcellularLocation>
        <location evidence="1">Cytoplasm</location>
    </subcellularLocation>
</comment>
<comment type="similarity">
    <text evidence="1">Belongs to the RimP family.</text>
</comment>
<protein>
    <recommendedName>
        <fullName evidence="1">Ribosome maturation factor RimP</fullName>
    </recommendedName>
</protein>
<dbReference type="EMBL" id="CP001618">
    <property type="protein sequence ID" value="ACQ80742.1"/>
    <property type="molecule type" value="Genomic_DNA"/>
</dbReference>
<dbReference type="RefSeq" id="WP_015882982.1">
    <property type="nucleotide sequence ID" value="NC_012669.1"/>
</dbReference>
<dbReference type="SMR" id="C5BWS6"/>
<dbReference type="STRING" id="471853.Bcav_2492"/>
<dbReference type="KEGG" id="bcv:Bcav_2492"/>
<dbReference type="eggNOG" id="COG0779">
    <property type="taxonomic scope" value="Bacteria"/>
</dbReference>
<dbReference type="HOGENOM" id="CLU_070525_3_0_11"/>
<dbReference type="OrthoDB" id="9805006at2"/>
<dbReference type="Proteomes" id="UP000007962">
    <property type="component" value="Chromosome"/>
</dbReference>
<dbReference type="GO" id="GO:0005829">
    <property type="term" value="C:cytosol"/>
    <property type="evidence" value="ECO:0007669"/>
    <property type="project" value="TreeGrafter"/>
</dbReference>
<dbReference type="GO" id="GO:0000028">
    <property type="term" value="P:ribosomal small subunit assembly"/>
    <property type="evidence" value="ECO:0007669"/>
    <property type="project" value="TreeGrafter"/>
</dbReference>
<dbReference type="GO" id="GO:0006412">
    <property type="term" value="P:translation"/>
    <property type="evidence" value="ECO:0007669"/>
    <property type="project" value="TreeGrafter"/>
</dbReference>
<dbReference type="CDD" id="cd01734">
    <property type="entry name" value="YlxS_C"/>
    <property type="match status" value="1"/>
</dbReference>
<dbReference type="Gene3D" id="3.30.300.70">
    <property type="entry name" value="RimP-like superfamily, N-terminal"/>
    <property type="match status" value="1"/>
</dbReference>
<dbReference type="HAMAP" id="MF_01077">
    <property type="entry name" value="RimP"/>
    <property type="match status" value="1"/>
</dbReference>
<dbReference type="InterPro" id="IPR003728">
    <property type="entry name" value="Ribosome_maturation_RimP"/>
</dbReference>
<dbReference type="InterPro" id="IPR028998">
    <property type="entry name" value="RimP_C"/>
</dbReference>
<dbReference type="InterPro" id="IPR036847">
    <property type="entry name" value="RimP_C_sf"/>
</dbReference>
<dbReference type="InterPro" id="IPR028989">
    <property type="entry name" value="RimP_N"/>
</dbReference>
<dbReference type="InterPro" id="IPR035956">
    <property type="entry name" value="RimP_N_sf"/>
</dbReference>
<dbReference type="PANTHER" id="PTHR33867">
    <property type="entry name" value="RIBOSOME MATURATION FACTOR RIMP"/>
    <property type="match status" value="1"/>
</dbReference>
<dbReference type="PANTHER" id="PTHR33867:SF1">
    <property type="entry name" value="RIBOSOME MATURATION FACTOR RIMP"/>
    <property type="match status" value="1"/>
</dbReference>
<dbReference type="Pfam" id="PF17384">
    <property type="entry name" value="DUF150_C"/>
    <property type="match status" value="1"/>
</dbReference>
<dbReference type="Pfam" id="PF02576">
    <property type="entry name" value="RimP_N"/>
    <property type="match status" value="1"/>
</dbReference>
<dbReference type="SUPFAM" id="SSF74942">
    <property type="entry name" value="YhbC-like, C-terminal domain"/>
    <property type="match status" value="1"/>
</dbReference>
<dbReference type="SUPFAM" id="SSF75420">
    <property type="entry name" value="YhbC-like, N-terminal domain"/>
    <property type="match status" value="1"/>
</dbReference>
<name>RIMP_BEUC1</name>
<organism>
    <name type="scientific">Beutenbergia cavernae (strain ATCC BAA-8 / DSM 12333 / CCUG 43141 / JCM 11478 / NBRC 16432 / NCIMB 13614 / HKI 0122)</name>
    <dbReference type="NCBI Taxonomy" id="471853"/>
    <lineage>
        <taxon>Bacteria</taxon>
        <taxon>Bacillati</taxon>
        <taxon>Actinomycetota</taxon>
        <taxon>Actinomycetes</taxon>
        <taxon>Micrococcales</taxon>
        <taxon>Beutenbergiaceae</taxon>
        <taxon>Beutenbergia</taxon>
    </lineage>
</organism>
<evidence type="ECO:0000255" key="1">
    <source>
        <dbReference type="HAMAP-Rule" id="MF_01077"/>
    </source>
</evidence>
<accession>C5BWS6</accession>
<gene>
    <name evidence="1" type="primary">rimP</name>
    <name type="ordered locus">Bcav_2492</name>
</gene>
<proteinExistence type="inferred from homology"/>
<sequence>MTPSPDTALLGRLRDLLEPVAAGCGLHLEDVAVSPAGRRRRVRVTLDLADGPGALGSNDLADASRAVSAALDDADVVTGPYVLEVSTPGTDRPLTQPRHFRRAQGRLVTLTLAAGTHVSGRLLSADDDGIHVRTDAGATTTFAYADVATGRVEVELRHLEEG</sequence>
<keyword id="KW-0963">Cytoplasm</keyword>
<keyword id="KW-1185">Reference proteome</keyword>
<keyword id="KW-0690">Ribosome biogenesis</keyword>
<feature type="chain" id="PRO_1000213485" description="Ribosome maturation factor RimP">
    <location>
        <begin position="1"/>
        <end position="162"/>
    </location>
</feature>
<reference key="1">
    <citation type="journal article" date="2009" name="Stand. Genomic Sci.">
        <title>Complete genome sequence of Beutenbergia cavernae type strain (HKI 0122).</title>
        <authorList>
            <person name="Land M."/>
            <person name="Pukall R."/>
            <person name="Abt B."/>
            <person name="Goker M."/>
            <person name="Rohde M."/>
            <person name="Glavina Del Rio T."/>
            <person name="Tice H."/>
            <person name="Copeland A."/>
            <person name="Cheng J.F."/>
            <person name="Lucas S."/>
            <person name="Chen F."/>
            <person name="Nolan M."/>
            <person name="Bruce D."/>
            <person name="Goodwin L."/>
            <person name="Pitluck S."/>
            <person name="Ivanova N."/>
            <person name="Mavromatis K."/>
            <person name="Ovchinnikova G."/>
            <person name="Pati A."/>
            <person name="Chen A."/>
            <person name="Palaniappan K."/>
            <person name="Hauser L."/>
            <person name="Chang Y.J."/>
            <person name="Jefferies C.C."/>
            <person name="Saunders E."/>
            <person name="Brettin T."/>
            <person name="Detter J.C."/>
            <person name="Han C."/>
            <person name="Chain P."/>
            <person name="Bristow J."/>
            <person name="Eisen J.A."/>
            <person name="Markowitz V."/>
            <person name="Hugenholtz P."/>
            <person name="Kyrpides N.C."/>
            <person name="Klenk H.P."/>
            <person name="Lapidus A."/>
        </authorList>
    </citation>
    <scope>NUCLEOTIDE SEQUENCE [LARGE SCALE GENOMIC DNA]</scope>
    <source>
        <strain>ATCC BAA-8 / DSM 12333 / CCUG 43141 / JCM 11478 / NBRC 16432 / NCIMB 13614 / HKI 0122</strain>
    </source>
</reference>